<sequence length="395" mass="43837">MDVSKVLILTLIWLLTADSAPPDYVTLTRKMESKILRVMGLSERPRPKPNATAPQYMWDLYRQQMAATEGAAASRGGETEIGKEEEEDGRPCSETKLSSNIIRSVSHTGGDLRASNSTSLQQILLFDVASIPHAETIEAADLRLEIPALPSATDVPSLAVRIYQLESRTRLNSIVSLKDKRLRLLDVVLADLSQGYAGTIDILSTVNSWRSKKTSNHGLLLHVELMSTSGNNRRGSQVIKELGAISKKCTANLIVTSSEYRQCSKRNRRNKRQAESEAPADISSFPTASLTNLCQRHRLFVSFRDVGWENWIIAPMGYQAYYCDGECPFPLGERLNGTNHAIIQTLVNSIDNRAVPKVCCAPTKLSGISMLYFDNNENVVLRQYEDMVVEACGCR</sequence>
<comment type="function">
    <text>Could have a critical role in early developmental decisions in the sea urchin embryo.</text>
</comment>
<comment type="subunit">
    <text evidence="4">Homodimer; disulfide-linked.</text>
</comment>
<comment type="subcellular location">
    <subcellularLocation>
        <location evidence="1">Secreted</location>
    </subcellularLocation>
</comment>
<comment type="developmental stage">
    <text>Highest levels of expression in the egg and prehatching blastula. During late cleavage stages, it accumulates progressively to a circumequatorial band. During gastrulation it is detected primarily in the presumptive foregut and ciliated band. By pluteus stage, it is detected only in these cell types.</text>
</comment>
<comment type="similarity">
    <text evidence="4">Belongs to the TGF-beta family.</text>
</comment>
<feature type="signal peptide" evidence="2">
    <location>
        <begin position="1"/>
        <end position="19"/>
    </location>
</feature>
<feature type="propeptide" id="PRO_0000034002" evidence="2">
    <location>
        <begin position="20"/>
        <end position="272"/>
    </location>
</feature>
<feature type="chain" id="PRO_0000034003" description="Univin">
    <location>
        <begin position="273"/>
        <end position="395"/>
    </location>
</feature>
<feature type="region of interest" description="Disordered" evidence="3">
    <location>
        <begin position="69"/>
        <end position="97"/>
    </location>
</feature>
<feature type="glycosylation site" description="N-linked (GlcNAc...) asparagine" evidence="2">
    <location>
        <position position="50"/>
    </location>
</feature>
<feature type="glycosylation site" description="N-linked (GlcNAc...) asparagine" evidence="2">
    <location>
        <position position="116"/>
    </location>
</feature>
<feature type="glycosylation site" description="N-linked (GlcNAc...) asparagine" evidence="2">
    <location>
        <position position="336"/>
    </location>
</feature>
<feature type="disulfide bond" evidence="1">
    <location>
        <begin position="294"/>
        <end position="360"/>
    </location>
</feature>
<feature type="disulfide bond" evidence="1">
    <location>
        <begin position="323"/>
        <end position="392"/>
    </location>
</feature>
<feature type="disulfide bond" evidence="1">
    <location>
        <begin position="327"/>
        <end position="394"/>
    </location>
</feature>
<feature type="disulfide bond" description="Interchain" evidence="1">
    <location>
        <position position="359"/>
    </location>
</feature>
<keyword id="KW-0165">Cleavage on pair of basic residues</keyword>
<keyword id="KW-0202">Cytokine</keyword>
<keyword id="KW-1015">Disulfide bond</keyword>
<keyword id="KW-0325">Glycoprotein</keyword>
<keyword id="KW-0339">Growth factor</keyword>
<keyword id="KW-1185">Reference proteome</keyword>
<keyword id="KW-0964">Secreted</keyword>
<keyword id="KW-0732">Signal</keyword>
<accession>P48970</accession>
<dbReference type="EMBL" id="U10533">
    <property type="protein sequence ID" value="AAA57553.2"/>
    <property type="molecule type" value="mRNA"/>
</dbReference>
<dbReference type="RefSeq" id="NP_999793.1">
    <property type="nucleotide sequence ID" value="NM_214628.1"/>
</dbReference>
<dbReference type="SMR" id="P48970"/>
<dbReference type="STRING" id="7668.P48970"/>
<dbReference type="EnsemblMetazoa" id="NM_214628">
    <property type="protein sequence ID" value="NP_999793"/>
    <property type="gene ID" value="LOC373488"/>
</dbReference>
<dbReference type="GeneID" id="373488"/>
<dbReference type="KEGG" id="spu:373488"/>
<dbReference type="eggNOG" id="KOG3900">
    <property type="taxonomic scope" value="Eukaryota"/>
</dbReference>
<dbReference type="HOGENOM" id="CLU_020515_4_0_1"/>
<dbReference type="InParanoid" id="P48970"/>
<dbReference type="OrthoDB" id="5987191at2759"/>
<dbReference type="PhylomeDB" id="P48970"/>
<dbReference type="Proteomes" id="UP000007110">
    <property type="component" value="Unassembled WGS sequence"/>
</dbReference>
<dbReference type="GO" id="GO:0005615">
    <property type="term" value="C:extracellular space"/>
    <property type="evidence" value="ECO:0000318"/>
    <property type="project" value="GO_Central"/>
</dbReference>
<dbReference type="GO" id="GO:0005125">
    <property type="term" value="F:cytokine activity"/>
    <property type="evidence" value="ECO:0000318"/>
    <property type="project" value="GO_Central"/>
</dbReference>
<dbReference type="GO" id="GO:0008083">
    <property type="term" value="F:growth factor activity"/>
    <property type="evidence" value="ECO:0007669"/>
    <property type="project" value="UniProtKB-KW"/>
</dbReference>
<dbReference type="CDD" id="cd19387">
    <property type="entry name" value="TGF_beta_univin"/>
    <property type="match status" value="1"/>
</dbReference>
<dbReference type="FunFam" id="2.10.90.10:FF:000001">
    <property type="entry name" value="Bone morphogenetic protein 4"/>
    <property type="match status" value="1"/>
</dbReference>
<dbReference type="Gene3D" id="2.60.120.970">
    <property type="match status" value="1"/>
</dbReference>
<dbReference type="Gene3D" id="2.10.90.10">
    <property type="entry name" value="Cystine-knot cytokines"/>
    <property type="match status" value="1"/>
</dbReference>
<dbReference type="InterPro" id="IPR029034">
    <property type="entry name" value="Cystine-knot_cytokine"/>
</dbReference>
<dbReference type="InterPro" id="IPR001839">
    <property type="entry name" value="TGF-b_C"/>
</dbReference>
<dbReference type="InterPro" id="IPR001111">
    <property type="entry name" value="TGF-b_propeptide"/>
</dbReference>
<dbReference type="InterPro" id="IPR015615">
    <property type="entry name" value="TGF-beta-rel"/>
</dbReference>
<dbReference type="InterPro" id="IPR017948">
    <property type="entry name" value="TGFb_CS"/>
</dbReference>
<dbReference type="PANTHER" id="PTHR11848:SF263">
    <property type="entry name" value="PROTEIN DECAPENTAPLEGIC"/>
    <property type="match status" value="1"/>
</dbReference>
<dbReference type="PANTHER" id="PTHR11848">
    <property type="entry name" value="TGF-BETA FAMILY"/>
    <property type="match status" value="1"/>
</dbReference>
<dbReference type="Pfam" id="PF00019">
    <property type="entry name" value="TGF_beta"/>
    <property type="match status" value="1"/>
</dbReference>
<dbReference type="Pfam" id="PF00688">
    <property type="entry name" value="TGFb_propeptide"/>
    <property type="match status" value="1"/>
</dbReference>
<dbReference type="SMART" id="SM00204">
    <property type="entry name" value="TGFB"/>
    <property type="match status" value="1"/>
</dbReference>
<dbReference type="SUPFAM" id="SSF57501">
    <property type="entry name" value="Cystine-knot cytokines"/>
    <property type="match status" value="1"/>
</dbReference>
<dbReference type="PROSITE" id="PS00250">
    <property type="entry name" value="TGF_BETA_1"/>
    <property type="match status" value="1"/>
</dbReference>
<dbReference type="PROSITE" id="PS51362">
    <property type="entry name" value="TGF_BETA_2"/>
    <property type="match status" value="1"/>
</dbReference>
<protein>
    <recommendedName>
        <fullName>Univin</fullName>
    </recommendedName>
</protein>
<evidence type="ECO:0000250" key="1"/>
<evidence type="ECO:0000255" key="2"/>
<evidence type="ECO:0000256" key="3">
    <source>
        <dbReference type="SAM" id="MobiDB-lite"/>
    </source>
</evidence>
<evidence type="ECO:0000305" key="4"/>
<proteinExistence type="evidence at transcript level"/>
<name>UNIV_STRPU</name>
<reference key="1">
    <citation type="journal article" date="1994" name="Dev. Biol.">
        <title>The univin gene encodes a member of the transforming growth factor-beta superfamily with restricted expression in the sea urchin embryo.</title>
        <authorList>
            <person name="Stenzel P."/>
            <person name="Angerer L.M."/>
            <person name="Smith B.J."/>
            <person name="Angerer R.C."/>
            <person name="Vale W.W."/>
        </authorList>
    </citation>
    <scope>NUCLEOTIDE SEQUENCE [MRNA]</scope>
</reference>
<reference key="2">
    <citation type="submission" date="2000-10" db="EMBL/GenBank/DDBJ databases">
        <authorList>
            <person name="Angerer L.M."/>
            <person name="Stenzel P."/>
        </authorList>
    </citation>
    <scope>SEQUENCE REVISION TO N-TERMINUS</scope>
</reference>
<organism>
    <name type="scientific">Strongylocentrotus purpuratus</name>
    <name type="common">Purple sea urchin</name>
    <dbReference type="NCBI Taxonomy" id="7668"/>
    <lineage>
        <taxon>Eukaryota</taxon>
        <taxon>Metazoa</taxon>
        <taxon>Echinodermata</taxon>
        <taxon>Eleutherozoa</taxon>
        <taxon>Echinozoa</taxon>
        <taxon>Echinoidea</taxon>
        <taxon>Euechinoidea</taxon>
        <taxon>Echinacea</taxon>
        <taxon>Camarodonta</taxon>
        <taxon>Echinidea</taxon>
        <taxon>Strongylocentrotidae</taxon>
        <taxon>Strongylocentrotus</taxon>
    </lineage>
</organism>